<feature type="chain" id="PRO_0000411890" description="Probable Xaa-Pro aminopeptidase pepP">
    <location>
        <begin position="1"/>
        <end position="468"/>
    </location>
</feature>
<feature type="binding site" evidence="1">
    <location>
        <position position="264"/>
    </location>
    <ligand>
        <name>Mn(2+)</name>
        <dbReference type="ChEBI" id="CHEBI:29035"/>
        <label>2</label>
    </ligand>
</feature>
<feature type="binding site" evidence="1">
    <location>
        <position position="275"/>
    </location>
    <ligand>
        <name>Mn(2+)</name>
        <dbReference type="ChEBI" id="CHEBI:29035"/>
        <label>1</label>
    </ligand>
</feature>
<feature type="binding site" evidence="1">
    <location>
        <position position="275"/>
    </location>
    <ligand>
        <name>Mn(2+)</name>
        <dbReference type="ChEBI" id="CHEBI:29035"/>
        <label>2</label>
    </ligand>
</feature>
<feature type="binding site" evidence="1">
    <location>
        <position position="398"/>
    </location>
    <ligand>
        <name>Mn(2+)</name>
        <dbReference type="ChEBI" id="CHEBI:29035"/>
        <label>1</label>
    </ligand>
</feature>
<feature type="binding site" evidence="1">
    <location>
        <position position="438"/>
    </location>
    <ligand>
        <name>Mn(2+)</name>
        <dbReference type="ChEBI" id="CHEBI:29035"/>
        <label>1</label>
    </ligand>
</feature>
<feature type="binding site" evidence="1">
    <location>
        <position position="438"/>
    </location>
    <ligand>
        <name>Mn(2+)</name>
        <dbReference type="ChEBI" id="CHEBI:29035"/>
        <label>2</label>
    </ligand>
</feature>
<reference key="1">
    <citation type="journal article" date="2015" name="Genome Announc.">
        <title>Genome sequence of the AIDS-associated pathogen Penicillium marneffei (ATCC18224) and its near taxonomic relative Talaromyces stipitatus (ATCC10500).</title>
        <authorList>
            <person name="Nierman W.C."/>
            <person name="Fedorova-Abrams N.D."/>
            <person name="Andrianopoulos A."/>
        </authorList>
    </citation>
    <scope>NUCLEOTIDE SEQUENCE [LARGE SCALE GENOMIC DNA]</scope>
    <source>
        <strain>ATCC 10500 / CBS 375.48 / QM 6759 / NRRL 1006</strain>
    </source>
</reference>
<sequence>MTSTEGILAGKYPAKAHARRVVEYLRQNGFEGDGVLYLEAQKTKMIEDNDSEQPFRQRRFFFYLSGCLLPDAHLTYHISSDKLALFIPPLDPESVIWSGLPLSPTQAKELYDVDEVLYTTDINPTLAHLASEVGTSGFVFAIDGQISDDISFKNFPETDLVALKTAIEECRVVKDAYEVAMIRKANDVTAQAHVAVLKATKSATNERELEAAFIGTCIAHGCREMAYHPIVASGTSSATLHYVNNDEPLIDLTTNKKKLNLLLDAAGEYKTYCADVTRTFPLSGKFSPESRQIYDIVLEMQTKSLAMLKEGVLWEDVHVTAHRVAIKGLLKLGILRGSEEELLEKRISVAFFPHGLGHYLGMDTHDTGGHANYADKDKMFRYLRVRGKLPAGSVITVEPGVYFCRFIIEPYLKDSELSKYIDADVLEKYWEVGGVRIEDNIHITKEGYDNLTTAPKTADQLELMINGS</sequence>
<dbReference type="EC" id="3.4.11.9"/>
<dbReference type="EMBL" id="EQ962653">
    <property type="protein sequence ID" value="EED21774.1"/>
    <property type="molecule type" value="Genomic_DNA"/>
</dbReference>
<dbReference type="RefSeq" id="XP_002478737.1">
    <property type="nucleotide sequence ID" value="XM_002478692.1"/>
</dbReference>
<dbReference type="SMR" id="B8M0Z4"/>
<dbReference type="FunCoup" id="B8M0Z4">
    <property type="interactions" value="434"/>
</dbReference>
<dbReference type="STRING" id="441959.B8M0Z4"/>
<dbReference type="GeneID" id="8108101"/>
<dbReference type="VEuPathDB" id="FungiDB:TSTA_090130"/>
<dbReference type="eggNOG" id="KOG2737">
    <property type="taxonomic scope" value="Eukaryota"/>
</dbReference>
<dbReference type="HOGENOM" id="CLU_017266_1_2_1"/>
<dbReference type="InParanoid" id="B8M0Z4"/>
<dbReference type="OMA" id="DAHALFF"/>
<dbReference type="OrthoDB" id="10261878at2759"/>
<dbReference type="PhylomeDB" id="B8M0Z4"/>
<dbReference type="Proteomes" id="UP000001745">
    <property type="component" value="Unassembled WGS sequence"/>
</dbReference>
<dbReference type="GO" id="GO:0030145">
    <property type="term" value="F:manganese ion binding"/>
    <property type="evidence" value="ECO:0007669"/>
    <property type="project" value="InterPro"/>
</dbReference>
<dbReference type="GO" id="GO:0070006">
    <property type="term" value="F:metalloaminopeptidase activity"/>
    <property type="evidence" value="ECO:0007669"/>
    <property type="project" value="InterPro"/>
</dbReference>
<dbReference type="GO" id="GO:0006508">
    <property type="term" value="P:proteolysis"/>
    <property type="evidence" value="ECO:0007669"/>
    <property type="project" value="UniProtKB-KW"/>
</dbReference>
<dbReference type="CDD" id="cd01087">
    <property type="entry name" value="Prolidase"/>
    <property type="match status" value="1"/>
</dbReference>
<dbReference type="FunFam" id="3.90.230.10:FF:000002">
    <property type="entry name" value="Xaa-Pro aminopeptidase 3"/>
    <property type="match status" value="1"/>
</dbReference>
<dbReference type="Gene3D" id="3.90.230.10">
    <property type="entry name" value="Creatinase/methionine aminopeptidase superfamily"/>
    <property type="match status" value="1"/>
</dbReference>
<dbReference type="Gene3D" id="3.40.350.10">
    <property type="entry name" value="Creatinase/prolidase N-terminal domain"/>
    <property type="match status" value="1"/>
</dbReference>
<dbReference type="InterPro" id="IPR007865">
    <property type="entry name" value="Aminopep_P_N"/>
</dbReference>
<dbReference type="InterPro" id="IPR029149">
    <property type="entry name" value="Creatin/AminoP/Spt16_N"/>
</dbReference>
<dbReference type="InterPro" id="IPR036005">
    <property type="entry name" value="Creatinase/aminopeptidase-like"/>
</dbReference>
<dbReference type="InterPro" id="IPR000994">
    <property type="entry name" value="Pept_M24"/>
</dbReference>
<dbReference type="InterPro" id="IPR052433">
    <property type="entry name" value="X-Pro_dipept-like"/>
</dbReference>
<dbReference type="PANTHER" id="PTHR43226">
    <property type="entry name" value="XAA-PRO AMINOPEPTIDASE 3"/>
    <property type="match status" value="1"/>
</dbReference>
<dbReference type="PANTHER" id="PTHR43226:SF1">
    <property type="entry name" value="XAA-PRO DIPEPTIDASE"/>
    <property type="match status" value="1"/>
</dbReference>
<dbReference type="Pfam" id="PF05195">
    <property type="entry name" value="AMP_N"/>
    <property type="match status" value="1"/>
</dbReference>
<dbReference type="Pfam" id="PF00557">
    <property type="entry name" value="Peptidase_M24"/>
    <property type="match status" value="1"/>
</dbReference>
<dbReference type="SMART" id="SM01011">
    <property type="entry name" value="AMP_N"/>
    <property type="match status" value="1"/>
</dbReference>
<dbReference type="SUPFAM" id="SSF55920">
    <property type="entry name" value="Creatinase/aminopeptidase"/>
    <property type="match status" value="1"/>
</dbReference>
<dbReference type="SUPFAM" id="SSF53092">
    <property type="entry name" value="Creatinase/prolidase N-terminal domain"/>
    <property type="match status" value="1"/>
</dbReference>
<organism>
    <name type="scientific">Talaromyces stipitatus (strain ATCC 10500 / CBS 375.48 / QM 6759 / NRRL 1006)</name>
    <name type="common">Penicillium stipitatum</name>
    <dbReference type="NCBI Taxonomy" id="441959"/>
    <lineage>
        <taxon>Eukaryota</taxon>
        <taxon>Fungi</taxon>
        <taxon>Dikarya</taxon>
        <taxon>Ascomycota</taxon>
        <taxon>Pezizomycotina</taxon>
        <taxon>Eurotiomycetes</taxon>
        <taxon>Eurotiomycetidae</taxon>
        <taxon>Eurotiales</taxon>
        <taxon>Trichocomaceae</taxon>
        <taxon>Talaromyces</taxon>
        <taxon>Talaromyces sect. Talaromyces</taxon>
    </lineage>
</organism>
<accession>B8M0Z4</accession>
<proteinExistence type="inferred from homology"/>
<name>AMPP3_TALSN</name>
<comment type="function">
    <text evidence="1">Catalyzes the removal of a penultimate prolyl residue from the N-termini of peptides.</text>
</comment>
<comment type="catalytic activity">
    <reaction>
        <text>Release of any N-terminal amino acid, including proline, that is linked to proline, even from a dipeptide or tripeptide.</text>
        <dbReference type="EC" id="3.4.11.9"/>
    </reaction>
</comment>
<comment type="cofactor">
    <cofactor evidence="1">
        <name>Mn(2+)</name>
        <dbReference type="ChEBI" id="CHEBI:29035"/>
    </cofactor>
    <text evidence="1">Binds 2 manganese ions per subunit.</text>
</comment>
<comment type="similarity">
    <text evidence="2">Belongs to the peptidase M24B family.</text>
</comment>
<evidence type="ECO:0000250" key="1"/>
<evidence type="ECO:0000305" key="2"/>
<gene>
    <name type="primary">pepP</name>
    <name type="ORF">TSTA_090130</name>
</gene>
<keyword id="KW-0031">Aminopeptidase</keyword>
<keyword id="KW-0378">Hydrolase</keyword>
<keyword id="KW-0464">Manganese</keyword>
<keyword id="KW-0479">Metal-binding</keyword>
<keyword id="KW-0482">Metalloprotease</keyword>
<keyword id="KW-0645">Protease</keyword>
<keyword id="KW-1185">Reference proteome</keyword>
<protein>
    <recommendedName>
        <fullName>Probable Xaa-Pro aminopeptidase pepP</fullName>
        <ecNumber>3.4.11.9</ecNumber>
    </recommendedName>
    <alternativeName>
        <fullName>Aminoacylproline aminopeptidase</fullName>
    </alternativeName>
    <alternativeName>
        <fullName>Prolidase</fullName>
    </alternativeName>
</protein>